<evidence type="ECO:0000250" key="1"/>
<evidence type="ECO:0000255" key="2">
    <source>
        <dbReference type="HAMAP-Rule" id="MF_01109"/>
    </source>
</evidence>
<evidence type="ECO:0000305" key="3"/>
<accession>O86132</accession>
<accession>Q65D87</accession>
<keyword id="KW-0056">Arginine metabolism</keyword>
<keyword id="KW-0963">Cytoplasm</keyword>
<keyword id="KW-1185">Reference proteome</keyword>
<keyword id="KW-0808">Transferase</keyword>
<comment type="function">
    <text evidence="1">Reversibly catalyzes the transfer of the carbamoyl group from carbamoyl phosphate (CP) to the N(epsilon) atom of ornithine (ORN) to produce L-citrulline.</text>
</comment>
<comment type="catalytic activity">
    <reaction>
        <text>carbamoyl phosphate + L-ornithine = L-citrulline + phosphate + H(+)</text>
        <dbReference type="Rhea" id="RHEA:19513"/>
        <dbReference type="ChEBI" id="CHEBI:15378"/>
        <dbReference type="ChEBI" id="CHEBI:43474"/>
        <dbReference type="ChEBI" id="CHEBI:46911"/>
        <dbReference type="ChEBI" id="CHEBI:57743"/>
        <dbReference type="ChEBI" id="CHEBI:58228"/>
        <dbReference type="EC" id="2.1.3.3"/>
    </reaction>
</comment>
<comment type="pathway">
    <text>Amino-acid degradation; L-arginine degradation via ADI pathway; carbamoyl phosphate from L-arginine: step 2/2.</text>
</comment>
<comment type="subcellular location">
    <subcellularLocation>
        <location evidence="1">Cytoplasm</location>
    </subcellularLocation>
</comment>
<comment type="similarity">
    <text evidence="3">Belongs to the aspartate/ornithine carbamoyltransferase superfamily. OTCase family.</text>
</comment>
<feature type="chain" id="PRO_0000112884" description="Ornithine carbamoyltransferase, catabolic">
    <location>
        <begin position="1"/>
        <end position="335"/>
    </location>
</feature>
<feature type="binding site" evidence="2">
    <location>
        <begin position="59"/>
        <end position="62"/>
    </location>
    <ligand>
        <name>carbamoyl phosphate</name>
        <dbReference type="ChEBI" id="CHEBI:58228"/>
    </ligand>
</feature>
<feature type="binding site" evidence="2">
    <location>
        <position position="86"/>
    </location>
    <ligand>
        <name>carbamoyl phosphate</name>
        <dbReference type="ChEBI" id="CHEBI:58228"/>
    </ligand>
</feature>
<feature type="binding site" evidence="2">
    <location>
        <position position="110"/>
    </location>
    <ligand>
        <name>carbamoyl phosphate</name>
        <dbReference type="ChEBI" id="CHEBI:58228"/>
    </ligand>
</feature>
<feature type="binding site" evidence="2">
    <location>
        <begin position="137"/>
        <end position="140"/>
    </location>
    <ligand>
        <name>carbamoyl phosphate</name>
        <dbReference type="ChEBI" id="CHEBI:58228"/>
    </ligand>
</feature>
<feature type="binding site" evidence="2">
    <location>
        <position position="169"/>
    </location>
    <ligand>
        <name>L-ornithine</name>
        <dbReference type="ChEBI" id="CHEBI:46911"/>
    </ligand>
</feature>
<feature type="binding site" evidence="2">
    <location>
        <position position="233"/>
    </location>
    <ligand>
        <name>L-ornithine</name>
        <dbReference type="ChEBI" id="CHEBI:46911"/>
    </ligand>
</feature>
<feature type="binding site" evidence="2">
    <location>
        <begin position="237"/>
        <end position="238"/>
    </location>
    <ligand>
        <name>L-ornithine</name>
        <dbReference type="ChEBI" id="CHEBI:46911"/>
    </ligand>
</feature>
<feature type="binding site" evidence="2">
    <location>
        <begin position="274"/>
        <end position="275"/>
    </location>
    <ligand>
        <name>carbamoyl phosphate</name>
        <dbReference type="ChEBI" id="CHEBI:58228"/>
    </ligand>
</feature>
<feature type="binding site" evidence="2">
    <location>
        <position position="319"/>
    </location>
    <ligand>
        <name>carbamoyl phosphate</name>
        <dbReference type="ChEBI" id="CHEBI:58228"/>
    </ligand>
</feature>
<organism>
    <name type="scientific">Bacillus licheniformis (strain ATCC 14580 / DSM 13 / JCM 2505 / CCUG 7422 / NBRC 12200 / NCIMB 9375 / NCTC 10341 / NRRL NRS-1264 / Gibson 46)</name>
    <dbReference type="NCBI Taxonomy" id="279010"/>
    <lineage>
        <taxon>Bacteria</taxon>
        <taxon>Bacillati</taxon>
        <taxon>Bacillota</taxon>
        <taxon>Bacilli</taxon>
        <taxon>Bacillales</taxon>
        <taxon>Bacillaceae</taxon>
        <taxon>Bacillus</taxon>
    </lineage>
</organism>
<sequence length="335" mass="37659">MNQTINLKGRSYLAEKDFSEEEILYLLDLAQKLKEKKAQGIRHRYLEGKNIALLFEKPSTRTRCAFTTACIDLGAHPEYLGKDDIQLGKKESIEDTAKVLGRMFDGIEFRGFEHEKVISLAEHSGVPVWNGLTDLWHPTQMLADFMTVKEHTGRVKGVKLTYIGDGRNNVANSLLIGGAKVGMDVRICSPQELFPDQDIVKMAEAFAEESGGKITVTSDTDKAVSGADVLYTDVWVSMGEEDKFAERIKLLKPYQVNMDLVKKTGNDNVIFLHCLPAFHDLHTTYGQNVYEQHGLKEMEVTDEVFRSKHSKVFDEAENRMHTIKAVMAATLGDLD</sequence>
<reference key="1">
    <citation type="journal article" date="1998" name="J. Bacteriol.">
        <title>The arcABDC gene cluster, encoding the arginine deiminase pathway of Bacillus licheniformis, and its activation by the arginine repressor argR.</title>
        <authorList>
            <person name="Maghnouj A."/>
            <person name="de Sousa Cabral T.F."/>
            <person name="Stalon V."/>
            <person name="Vander Wauven C."/>
        </authorList>
    </citation>
    <scope>NUCLEOTIDE SEQUENCE [GENOMIC DNA]</scope>
</reference>
<reference key="2">
    <citation type="journal article" date="2004" name="J. Mol. Microbiol. Biotechnol.">
        <title>The complete genome sequence of Bacillus licheniformis DSM13, an organism with great industrial potential.</title>
        <authorList>
            <person name="Veith B."/>
            <person name="Herzberg C."/>
            <person name="Steckel S."/>
            <person name="Feesche J."/>
            <person name="Maurer K.H."/>
            <person name="Ehrenreich P."/>
            <person name="Baeumer S."/>
            <person name="Henne A."/>
            <person name="Liesegang H."/>
            <person name="Merkl R."/>
            <person name="Ehrenreich A."/>
            <person name="Gottschalk G."/>
        </authorList>
    </citation>
    <scope>NUCLEOTIDE SEQUENCE [LARGE SCALE GENOMIC DNA]</scope>
    <source>
        <strain>ATCC 14580 / DSM 13 / JCM 2505 / CCUG 7422 / NBRC 12200 / NCIMB 9375 / NCTC 10341 / NRRL NRS-1264 / Gibson 46</strain>
    </source>
</reference>
<reference key="3">
    <citation type="journal article" date="2004" name="Genome Biol.">
        <title>Complete genome sequence of the industrial bacterium Bacillus licheniformis and comparisons with closely related Bacillus species.</title>
        <authorList>
            <person name="Rey M.W."/>
            <person name="Ramaiya P."/>
            <person name="Nelson B.A."/>
            <person name="Brody-Karpin S.D."/>
            <person name="Zaretsky E.J."/>
            <person name="Tang M."/>
            <person name="Lopez de Leon A."/>
            <person name="Xiang H."/>
            <person name="Gusti V."/>
            <person name="Clausen I.G."/>
            <person name="Olsen P.B."/>
            <person name="Rasmussen M.D."/>
            <person name="Andersen J.T."/>
            <person name="Joergensen P.L."/>
            <person name="Larsen T.S."/>
            <person name="Sorokin A."/>
            <person name="Bolotin A."/>
            <person name="Lapidus A."/>
            <person name="Galleron N."/>
            <person name="Ehrlich S.D."/>
            <person name="Berka R.M."/>
        </authorList>
    </citation>
    <scope>NUCLEOTIDE SEQUENCE [LARGE SCALE GENOMIC DNA]</scope>
    <source>
        <strain>ATCC 14580 / DSM 13 / JCM 2505 / CCUG 7422 / NBRC 12200 / NCIMB 9375 / NCTC 10341 / NRRL NRS-1264 / Gibson 46</strain>
    </source>
</reference>
<proteinExistence type="inferred from homology"/>
<dbReference type="EC" id="2.1.3.3"/>
<dbReference type="EMBL" id="Y17554">
    <property type="protein sequence ID" value="CAA76778.1"/>
    <property type="molecule type" value="Genomic_DNA"/>
</dbReference>
<dbReference type="EMBL" id="AE017333">
    <property type="protein sequence ID" value="AAU42977.1"/>
    <property type="molecule type" value="Genomic_DNA"/>
</dbReference>
<dbReference type="EMBL" id="CP000002">
    <property type="protein sequence ID" value="AAU25598.1"/>
    <property type="molecule type" value="Genomic_DNA"/>
</dbReference>
<dbReference type="SMR" id="O86132"/>
<dbReference type="STRING" id="279010.BL01914"/>
<dbReference type="KEGG" id="bld:BLi04164"/>
<dbReference type="KEGG" id="bli:BL01914"/>
<dbReference type="eggNOG" id="COG0078">
    <property type="taxonomic scope" value="Bacteria"/>
</dbReference>
<dbReference type="HOGENOM" id="CLU_043846_3_1_9"/>
<dbReference type="UniPathway" id="UPA00254">
    <property type="reaction ID" value="UER00365"/>
</dbReference>
<dbReference type="Proteomes" id="UP000000606">
    <property type="component" value="Chromosome"/>
</dbReference>
<dbReference type="GO" id="GO:0005737">
    <property type="term" value="C:cytoplasm"/>
    <property type="evidence" value="ECO:0007669"/>
    <property type="project" value="UniProtKB-SubCell"/>
</dbReference>
<dbReference type="GO" id="GO:0016597">
    <property type="term" value="F:amino acid binding"/>
    <property type="evidence" value="ECO:0007669"/>
    <property type="project" value="InterPro"/>
</dbReference>
<dbReference type="GO" id="GO:0004585">
    <property type="term" value="F:ornithine carbamoyltransferase activity"/>
    <property type="evidence" value="ECO:0007669"/>
    <property type="project" value="UniProtKB-UniRule"/>
</dbReference>
<dbReference type="GO" id="GO:0042450">
    <property type="term" value="P:arginine biosynthetic process via ornithine"/>
    <property type="evidence" value="ECO:0007669"/>
    <property type="project" value="TreeGrafter"/>
</dbReference>
<dbReference type="GO" id="GO:0019547">
    <property type="term" value="P:arginine catabolic process to ornithine"/>
    <property type="evidence" value="ECO:0007669"/>
    <property type="project" value="UniProtKB-UniPathway"/>
</dbReference>
<dbReference type="GO" id="GO:0019240">
    <property type="term" value="P:citrulline biosynthetic process"/>
    <property type="evidence" value="ECO:0007669"/>
    <property type="project" value="TreeGrafter"/>
</dbReference>
<dbReference type="GO" id="GO:0006526">
    <property type="term" value="P:L-arginine biosynthetic process"/>
    <property type="evidence" value="ECO:0007669"/>
    <property type="project" value="UniProtKB-UniRule"/>
</dbReference>
<dbReference type="FunFam" id="3.40.50.1370:FF:000004">
    <property type="entry name" value="Ornithine carbamoyltransferase"/>
    <property type="match status" value="1"/>
</dbReference>
<dbReference type="Gene3D" id="3.40.50.1370">
    <property type="entry name" value="Aspartate/ornithine carbamoyltransferase"/>
    <property type="match status" value="2"/>
</dbReference>
<dbReference type="HAMAP" id="MF_01109">
    <property type="entry name" value="OTCase"/>
    <property type="match status" value="1"/>
</dbReference>
<dbReference type="InterPro" id="IPR006132">
    <property type="entry name" value="Asp/Orn_carbamoyltranf_P-bd"/>
</dbReference>
<dbReference type="InterPro" id="IPR006130">
    <property type="entry name" value="Asp/Orn_carbamoylTrfase"/>
</dbReference>
<dbReference type="InterPro" id="IPR036901">
    <property type="entry name" value="Asp/Orn_carbamoylTrfase_sf"/>
</dbReference>
<dbReference type="InterPro" id="IPR006131">
    <property type="entry name" value="Asp_carbamoyltransf_Asp/Orn-bd"/>
</dbReference>
<dbReference type="InterPro" id="IPR002292">
    <property type="entry name" value="Orn/put_carbamltrans"/>
</dbReference>
<dbReference type="InterPro" id="IPR024904">
    <property type="entry name" value="OTCase_ArgI"/>
</dbReference>
<dbReference type="NCBIfam" id="TIGR00658">
    <property type="entry name" value="orni_carb_tr"/>
    <property type="match status" value="1"/>
</dbReference>
<dbReference type="NCBIfam" id="NF001986">
    <property type="entry name" value="PRK00779.1"/>
    <property type="match status" value="1"/>
</dbReference>
<dbReference type="PANTHER" id="PTHR45753:SF1">
    <property type="entry name" value="ORNITHINE CARBAMOYLTRANSFERASE, CATABOLIC"/>
    <property type="match status" value="1"/>
</dbReference>
<dbReference type="PANTHER" id="PTHR45753">
    <property type="entry name" value="ORNITHINE CARBAMOYLTRANSFERASE, MITOCHONDRIAL"/>
    <property type="match status" value="1"/>
</dbReference>
<dbReference type="Pfam" id="PF00185">
    <property type="entry name" value="OTCace"/>
    <property type="match status" value="1"/>
</dbReference>
<dbReference type="Pfam" id="PF02729">
    <property type="entry name" value="OTCace_N"/>
    <property type="match status" value="1"/>
</dbReference>
<dbReference type="PRINTS" id="PR00100">
    <property type="entry name" value="AOTCASE"/>
</dbReference>
<dbReference type="PRINTS" id="PR00102">
    <property type="entry name" value="OTCASE"/>
</dbReference>
<dbReference type="SUPFAM" id="SSF53671">
    <property type="entry name" value="Aspartate/ornithine carbamoyltransferase"/>
    <property type="match status" value="1"/>
</dbReference>
<dbReference type="PROSITE" id="PS00097">
    <property type="entry name" value="CARBAMOYLTRANSFERASE"/>
    <property type="match status" value="1"/>
</dbReference>
<protein>
    <recommendedName>
        <fullName>Ornithine carbamoyltransferase, catabolic</fullName>
        <shortName>OTCase</shortName>
        <ecNumber>2.1.3.3</ecNumber>
    </recommendedName>
</protein>
<name>OTCC_BACLD</name>
<gene>
    <name type="primary">arcB</name>
    <name type="ordered locus">BLi04164</name>
    <name type="ordered locus">BL01914</name>
</gene>